<accession>C5DAT8</accession>
<gene>
    <name evidence="1" type="primary">dabA</name>
    <name type="ordered locus">GWCH70_1610</name>
</gene>
<comment type="function">
    <text evidence="1">Part of an energy-coupled inorganic carbon pump.</text>
</comment>
<comment type="cofactor">
    <cofactor evidence="1">
        <name>Zn(2+)</name>
        <dbReference type="ChEBI" id="CHEBI:29105"/>
    </cofactor>
</comment>
<comment type="subunit">
    <text evidence="1">Forms a complex with DabB.</text>
</comment>
<comment type="subcellular location">
    <subcellularLocation>
        <location evidence="1">Cell membrane</location>
        <topology evidence="1">Peripheral membrane protein</topology>
    </subcellularLocation>
</comment>
<comment type="similarity">
    <text evidence="1">Belongs to the inorganic carbon transporter (TC 9.A.2) DabA family.</text>
</comment>
<reference key="1">
    <citation type="submission" date="2009-06" db="EMBL/GenBank/DDBJ databases">
        <title>Complete sequence of chromosome of Geopacillus sp. WCH70.</title>
        <authorList>
            <consortium name="US DOE Joint Genome Institute"/>
            <person name="Lucas S."/>
            <person name="Copeland A."/>
            <person name="Lapidus A."/>
            <person name="Glavina del Rio T."/>
            <person name="Dalin E."/>
            <person name="Tice H."/>
            <person name="Bruce D."/>
            <person name="Goodwin L."/>
            <person name="Pitluck S."/>
            <person name="Chertkov O."/>
            <person name="Brettin T."/>
            <person name="Detter J.C."/>
            <person name="Han C."/>
            <person name="Larimer F."/>
            <person name="Land M."/>
            <person name="Hauser L."/>
            <person name="Kyrpides N."/>
            <person name="Mikhailova N."/>
            <person name="Brumm P."/>
            <person name="Mead D.A."/>
            <person name="Richardson P."/>
        </authorList>
    </citation>
    <scope>NUCLEOTIDE SEQUENCE [LARGE SCALE GENOMIC DNA]</scope>
    <source>
        <strain>WCH70</strain>
    </source>
</reference>
<feature type="chain" id="PRO_0000387264" description="Probable inorganic carbon transporter subunit DabA">
    <location>
        <begin position="1"/>
        <end position="881"/>
    </location>
</feature>
<feature type="binding site" evidence="1">
    <location>
        <position position="399"/>
    </location>
    <ligand>
        <name>Zn(2+)</name>
        <dbReference type="ChEBI" id="CHEBI:29105"/>
    </ligand>
</feature>
<feature type="binding site" evidence="1">
    <location>
        <position position="401"/>
    </location>
    <ligand>
        <name>Zn(2+)</name>
        <dbReference type="ChEBI" id="CHEBI:29105"/>
    </ligand>
</feature>
<feature type="binding site" evidence="1">
    <location>
        <position position="585"/>
    </location>
    <ligand>
        <name>Zn(2+)</name>
        <dbReference type="ChEBI" id="CHEBI:29105"/>
    </ligand>
</feature>
<feature type="binding site" evidence="1">
    <location>
        <position position="600"/>
    </location>
    <ligand>
        <name>Zn(2+)</name>
        <dbReference type="ChEBI" id="CHEBI:29105"/>
    </ligand>
</feature>
<evidence type="ECO:0000255" key="1">
    <source>
        <dbReference type="HAMAP-Rule" id="MF_01871"/>
    </source>
</evidence>
<name>DABA_GEOSW</name>
<organism>
    <name type="scientific">Geobacillus sp. (strain WCH70)</name>
    <dbReference type="NCBI Taxonomy" id="471223"/>
    <lineage>
        <taxon>Bacteria</taxon>
        <taxon>Bacillati</taxon>
        <taxon>Bacillota</taxon>
        <taxon>Bacilli</taxon>
        <taxon>Bacillales</taxon>
        <taxon>Anoxybacillaceae</taxon>
        <taxon>Geobacillus</taxon>
    </lineage>
</organism>
<sequence length="881" mass="100262">MNTTTVSLERPNVHERRRENVATDINVNALVKNASKAIAPLWPIATFVARHPWMGLEHFSFEQVVHRLKLLRDIDLYPSMAMFRAAQRKGELNPKFLEMRLQRWLDEQPLTMPREEAERFCRAALLHEEIPNELLTSSSLKSLAAKMKDMRLRYDSNHLLTRPLSLLLEEQGKEKWARVLDHQMIKWCKLFLDESQALWAMPYREKGFYYAWRKLVINDPSLNKQQRERLKDLPHDPEEALRQALMLLGIPHGEMKGYLEAHLLSLPGWAGMLLWRSQQSGQAHLLLVDYLAIRLSLEWALIAPHLPFAKQKDDDEAFLLPLLAAWMHWGGWTPEKWLQLPQAEQQARLSFAYRFDKIVRGKLWLEAWEDTQEAQLKKRIASHSQNNEPKQAVAQLIFCMDVRSEPFRRHLEQAGPFETYGCAGFFGLPIKTRELDSSHAHASCPVIVEPRHEVQEFTSAENVKKYRGRRNALLSVSHTFKKMKQHLFASLLLPEVSGPLLGLHTLARSIAPSGAGRVFHQFQDNWAQKPATELSLNRESSLETTETTDLPVGFSTEEKVRYVYQLFKGMGLTSRFAPLVVVCGHESTTTNNPYASSLDCGACGGAAGGFNARVFAALCNLKEVREGLAKEGIVIPEDTVFVAAEHMTTVDDLCWLYVPTLSEAAQKAFDMLQGKLEEVSRNANNERLSKLPGLEGKKKDPLAEAHRRAEDWSEIRPEWGLAGNAALIIGRRELTKHCNLEGRVFLHSYDWRKDPSGEALANIITGPVTVAQWINLQYYASTVAPHYYGSGNKTTQTVTAGIGVMQGNASDLLAGLPWQSVMASDEEIFHSPLRLLVIIEAPQQNIERLFEDDPHFRRKVKNGWLRLVSIDPDSGEWKAWR</sequence>
<proteinExistence type="inferred from homology"/>
<dbReference type="EMBL" id="CP001638">
    <property type="protein sequence ID" value="ACS24402.1"/>
    <property type="molecule type" value="Genomic_DNA"/>
</dbReference>
<dbReference type="STRING" id="471223.GWCH70_1610"/>
<dbReference type="KEGG" id="gwc:GWCH70_1610"/>
<dbReference type="eggNOG" id="COG3002">
    <property type="taxonomic scope" value="Bacteria"/>
</dbReference>
<dbReference type="HOGENOM" id="CLU_009885_0_0_9"/>
<dbReference type="OrthoDB" id="9805101at2"/>
<dbReference type="GO" id="GO:0005886">
    <property type="term" value="C:plasma membrane"/>
    <property type="evidence" value="ECO:0007669"/>
    <property type="project" value="UniProtKB-SubCell"/>
</dbReference>
<dbReference type="GO" id="GO:0008270">
    <property type="term" value="F:zinc ion binding"/>
    <property type="evidence" value="ECO:0007669"/>
    <property type="project" value="UniProtKB-UniRule"/>
</dbReference>
<dbReference type="HAMAP" id="MF_01871">
    <property type="entry name" value="DabA"/>
    <property type="match status" value="1"/>
</dbReference>
<dbReference type="InterPro" id="IPR018752">
    <property type="entry name" value="DabA"/>
</dbReference>
<dbReference type="PANTHER" id="PTHR38344:SF1">
    <property type="entry name" value="INORGANIC CARBON TRANSPORTER SUBUNIT DABA-RELATED"/>
    <property type="match status" value="1"/>
</dbReference>
<dbReference type="PANTHER" id="PTHR38344">
    <property type="entry name" value="UPF0753 PROTEIN AQ_863"/>
    <property type="match status" value="1"/>
</dbReference>
<dbReference type="Pfam" id="PF10070">
    <property type="entry name" value="DabA"/>
    <property type="match status" value="1"/>
</dbReference>
<protein>
    <recommendedName>
        <fullName evidence="1">Probable inorganic carbon transporter subunit DabA</fullName>
    </recommendedName>
</protein>
<keyword id="KW-1003">Cell membrane</keyword>
<keyword id="KW-0472">Membrane</keyword>
<keyword id="KW-0479">Metal-binding</keyword>
<keyword id="KW-0813">Transport</keyword>
<keyword id="KW-0862">Zinc</keyword>